<protein>
    <recommendedName>
        <fullName evidence="1">Probable RNA 2'-phosphotransferase</fullName>
        <ecNumber evidence="1">2.7.1.-</ecNumber>
    </recommendedName>
</protein>
<comment type="function">
    <text evidence="1">Removes the 2'-phosphate from RNA via an intermediate in which the phosphate is ADP-ribosylated by NAD followed by a presumed transesterification to release the RNA and generate ADP-ribose 1''-2''-cyclic phosphate (APPR&gt;P). May function as an ADP-ribosylase.</text>
</comment>
<comment type="similarity">
    <text evidence="1">Belongs to the KptA/TPT1 family.</text>
</comment>
<evidence type="ECO:0000255" key="1">
    <source>
        <dbReference type="HAMAP-Rule" id="MF_00299"/>
    </source>
</evidence>
<keyword id="KW-0520">NAD</keyword>
<keyword id="KW-1185">Reference proteome</keyword>
<keyword id="KW-0808">Transferase</keyword>
<organism>
    <name type="scientific">Escherichia coli O45:K1 (strain S88 / ExPEC)</name>
    <dbReference type="NCBI Taxonomy" id="585035"/>
    <lineage>
        <taxon>Bacteria</taxon>
        <taxon>Pseudomonadati</taxon>
        <taxon>Pseudomonadota</taxon>
        <taxon>Gammaproteobacteria</taxon>
        <taxon>Enterobacterales</taxon>
        <taxon>Enterobacteriaceae</taxon>
        <taxon>Escherichia</taxon>
    </lineage>
</organism>
<reference key="1">
    <citation type="journal article" date="2009" name="PLoS Genet.">
        <title>Organised genome dynamics in the Escherichia coli species results in highly diverse adaptive paths.</title>
        <authorList>
            <person name="Touchon M."/>
            <person name="Hoede C."/>
            <person name="Tenaillon O."/>
            <person name="Barbe V."/>
            <person name="Baeriswyl S."/>
            <person name="Bidet P."/>
            <person name="Bingen E."/>
            <person name="Bonacorsi S."/>
            <person name="Bouchier C."/>
            <person name="Bouvet O."/>
            <person name="Calteau A."/>
            <person name="Chiapello H."/>
            <person name="Clermont O."/>
            <person name="Cruveiller S."/>
            <person name="Danchin A."/>
            <person name="Diard M."/>
            <person name="Dossat C."/>
            <person name="Karoui M.E."/>
            <person name="Frapy E."/>
            <person name="Garry L."/>
            <person name="Ghigo J.M."/>
            <person name="Gilles A.M."/>
            <person name="Johnson J."/>
            <person name="Le Bouguenec C."/>
            <person name="Lescat M."/>
            <person name="Mangenot S."/>
            <person name="Martinez-Jehanne V."/>
            <person name="Matic I."/>
            <person name="Nassif X."/>
            <person name="Oztas S."/>
            <person name="Petit M.A."/>
            <person name="Pichon C."/>
            <person name="Rouy Z."/>
            <person name="Ruf C.S."/>
            <person name="Schneider D."/>
            <person name="Tourret J."/>
            <person name="Vacherie B."/>
            <person name="Vallenet D."/>
            <person name="Medigue C."/>
            <person name="Rocha E.P.C."/>
            <person name="Denamur E."/>
        </authorList>
    </citation>
    <scope>NUCLEOTIDE SEQUENCE [LARGE SCALE GENOMIC DNA]</scope>
    <source>
        <strain>S88 / ExPEC</strain>
    </source>
</reference>
<name>KPTA_ECO45</name>
<accession>B7MMM2</accession>
<sequence>MAKYNEKELADTSKFLSFVLRHKPEAIGIVLDREGWADIDKLILCAQKAGKRLTRALLDTVVATSDKKRFSYSSDGRCIRAVQGHSTSQVAISFAEKTPPQFLYHGTASRFLDEIKKQGLIAGERHYVHLSADEATARKVGARYGSPVILTVKAQEMAKRGIPFWQAENGVWLTSTVAVEFLEWPFMPAGVQKQ</sequence>
<gene>
    <name evidence="1" type="primary">kptA</name>
    <name type="ordered locus">ECS88_4951</name>
</gene>
<dbReference type="EC" id="2.7.1.-" evidence="1"/>
<dbReference type="EMBL" id="CU928161">
    <property type="protein sequence ID" value="CAR06095.1"/>
    <property type="molecule type" value="Genomic_DNA"/>
</dbReference>
<dbReference type="RefSeq" id="WP_001380868.1">
    <property type="nucleotide sequence ID" value="NC_011742.1"/>
</dbReference>
<dbReference type="SMR" id="B7MMM2"/>
<dbReference type="KEGG" id="ecz:ECS88_4951"/>
<dbReference type="HOGENOM" id="CLU_052998_4_0_6"/>
<dbReference type="Proteomes" id="UP000000747">
    <property type="component" value="Chromosome"/>
</dbReference>
<dbReference type="GO" id="GO:0003950">
    <property type="term" value="F:NAD+ poly-ADP-ribosyltransferase activity"/>
    <property type="evidence" value="ECO:0007669"/>
    <property type="project" value="InterPro"/>
</dbReference>
<dbReference type="GO" id="GO:0000215">
    <property type="term" value="F:tRNA 2'-phosphotransferase activity"/>
    <property type="evidence" value="ECO:0007669"/>
    <property type="project" value="TreeGrafter"/>
</dbReference>
<dbReference type="GO" id="GO:0006388">
    <property type="term" value="P:tRNA splicing, via endonucleolytic cleavage and ligation"/>
    <property type="evidence" value="ECO:0007669"/>
    <property type="project" value="UniProtKB-UniRule"/>
</dbReference>
<dbReference type="FunFam" id="1.10.10.970:FF:000001">
    <property type="entry name" value="RNA 2'-phosphotransferase"/>
    <property type="match status" value="1"/>
</dbReference>
<dbReference type="FunFam" id="3.20.170.30:FF:000001">
    <property type="entry name" value="RNA 2'-phosphotransferase"/>
    <property type="match status" value="1"/>
</dbReference>
<dbReference type="Gene3D" id="3.20.170.30">
    <property type="match status" value="1"/>
</dbReference>
<dbReference type="Gene3D" id="1.10.10.970">
    <property type="entry name" value="RNA 2'-phosphotransferase, Tpt1/KptA family, N-terminal domain"/>
    <property type="match status" value="1"/>
</dbReference>
<dbReference type="HAMAP" id="MF_00299">
    <property type="entry name" value="KptA"/>
    <property type="match status" value="1"/>
</dbReference>
<dbReference type="InterPro" id="IPR002745">
    <property type="entry name" value="Ptrans_KptA/Tpt1"/>
</dbReference>
<dbReference type="InterPro" id="IPR042081">
    <property type="entry name" value="RNA_2'-PTrans_C"/>
</dbReference>
<dbReference type="InterPro" id="IPR022928">
    <property type="entry name" value="RNA_2'-PTrans_KptA"/>
</dbReference>
<dbReference type="InterPro" id="IPR042080">
    <property type="entry name" value="RNA_2'-PTrans_N"/>
</dbReference>
<dbReference type="NCBIfam" id="NF002012">
    <property type="entry name" value="PRK00819.1-1"/>
    <property type="match status" value="1"/>
</dbReference>
<dbReference type="NCBIfam" id="NF002014">
    <property type="entry name" value="PRK00819.1-4"/>
    <property type="match status" value="1"/>
</dbReference>
<dbReference type="PANTHER" id="PTHR12684">
    <property type="entry name" value="PUTATIVE PHOSPHOTRANSFERASE"/>
    <property type="match status" value="1"/>
</dbReference>
<dbReference type="PANTHER" id="PTHR12684:SF2">
    <property type="entry name" value="TRNA 2'-PHOSPHOTRANSFERASE 1"/>
    <property type="match status" value="1"/>
</dbReference>
<dbReference type="Pfam" id="PF01885">
    <property type="entry name" value="PTS_2-RNA"/>
    <property type="match status" value="1"/>
</dbReference>
<dbReference type="SUPFAM" id="SSF56399">
    <property type="entry name" value="ADP-ribosylation"/>
    <property type="match status" value="1"/>
</dbReference>
<proteinExistence type="inferred from homology"/>
<feature type="chain" id="PRO_1000119478" description="Probable RNA 2'-phosphotransferase">
    <location>
        <begin position="1"/>
        <end position="194"/>
    </location>
</feature>